<dbReference type="EMBL" id="CP000612">
    <property type="protein sequence ID" value="ABO48775.1"/>
    <property type="molecule type" value="Genomic_DNA"/>
</dbReference>
<dbReference type="RefSeq" id="WP_011876615.1">
    <property type="nucleotide sequence ID" value="NC_009253.1"/>
</dbReference>
<dbReference type="SMR" id="A4J122"/>
<dbReference type="STRING" id="349161.Dred_0226"/>
<dbReference type="KEGG" id="drm:Dred_0226"/>
<dbReference type="eggNOG" id="COG0198">
    <property type="taxonomic scope" value="Bacteria"/>
</dbReference>
<dbReference type="HOGENOM" id="CLU_093315_2_3_9"/>
<dbReference type="OrthoDB" id="9807419at2"/>
<dbReference type="Proteomes" id="UP000001556">
    <property type="component" value="Chromosome"/>
</dbReference>
<dbReference type="GO" id="GO:1990904">
    <property type="term" value="C:ribonucleoprotein complex"/>
    <property type="evidence" value="ECO:0007669"/>
    <property type="project" value="UniProtKB-KW"/>
</dbReference>
<dbReference type="GO" id="GO:0005840">
    <property type="term" value="C:ribosome"/>
    <property type="evidence" value="ECO:0007669"/>
    <property type="project" value="UniProtKB-KW"/>
</dbReference>
<dbReference type="GO" id="GO:0019843">
    <property type="term" value="F:rRNA binding"/>
    <property type="evidence" value="ECO:0007669"/>
    <property type="project" value="UniProtKB-UniRule"/>
</dbReference>
<dbReference type="GO" id="GO:0003735">
    <property type="term" value="F:structural constituent of ribosome"/>
    <property type="evidence" value="ECO:0007669"/>
    <property type="project" value="InterPro"/>
</dbReference>
<dbReference type="GO" id="GO:0006412">
    <property type="term" value="P:translation"/>
    <property type="evidence" value="ECO:0007669"/>
    <property type="project" value="UniProtKB-UniRule"/>
</dbReference>
<dbReference type="CDD" id="cd06089">
    <property type="entry name" value="KOW_RPL26"/>
    <property type="match status" value="1"/>
</dbReference>
<dbReference type="FunFam" id="2.30.30.30:FF:000004">
    <property type="entry name" value="50S ribosomal protein L24"/>
    <property type="match status" value="1"/>
</dbReference>
<dbReference type="Gene3D" id="2.30.30.30">
    <property type="match status" value="1"/>
</dbReference>
<dbReference type="HAMAP" id="MF_01326_B">
    <property type="entry name" value="Ribosomal_uL24_B"/>
    <property type="match status" value="1"/>
</dbReference>
<dbReference type="InterPro" id="IPR005824">
    <property type="entry name" value="KOW"/>
</dbReference>
<dbReference type="InterPro" id="IPR014722">
    <property type="entry name" value="Rib_uL2_dom2"/>
</dbReference>
<dbReference type="InterPro" id="IPR003256">
    <property type="entry name" value="Ribosomal_uL24"/>
</dbReference>
<dbReference type="InterPro" id="IPR005825">
    <property type="entry name" value="Ribosomal_uL24_CS"/>
</dbReference>
<dbReference type="InterPro" id="IPR041988">
    <property type="entry name" value="Ribosomal_uL24_KOW"/>
</dbReference>
<dbReference type="InterPro" id="IPR008991">
    <property type="entry name" value="Translation_prot_SH3-like_sf"/>
</dbReference>
<dbReference type="NCBIfam" id="TIGR01079">
    <property type="entry name" value="rplX_bact"/>
    <property type="match status" value="1"/>
</dbReference>
<dbReference type="PANTHER" id="PTHR12903">
    <property type="entry name" value="MITOCHONDRIAL RIBOSOMAL PROTEIN L24"/>
    <property type="match status" value="1"/>
</dbReference>
<dbReference type="Pfam" id="PF00467">
    <property type="entry name" value="KOW"/>
    <property type="match status" value="1"/>
</dbReference>
<dbReference type="Pfam" id="PF17136">
    <property type="entry name" value="ribosomal_L24"/>
    <property type="match status" value="1"/>
</dbReference>
<dbReference type="SMART" id="SM00739">
    <property type="entry name" value="KOW"/>
    <property type="match status" value="1"/>
</dbReference>
<dbReference type="SUPFAM" id="SSF50104">
    <property type="entry name" value="Translation proteins SH3-like domain"/>
    <property type="match status" value="1"/>
</dbReference>
<dbReference type="PROSITE" id="PS01108">
    <property type="entry name" value="RIBOSOMAL_L24"/>
    <property type="match status" value="1"/>
</dbReference>
<feature type="chain" id="PRO_0000355677" description="Large ribosomal subunit protein uL24">
    <location>
        <begin position="1"/>
        <end position="106"/>
    </location>
</feature>
<name>RL24_DESRM</name>
<keyword id="KW-1185">Reference proteome</keyword>
<keyword id="KW-0687">Ribonucleoprotein</keyword>
<keyword id="KW-0689">Ribosomal protein</keyword>
<keyword id="KW-0694">RNA-binding</keyword>
<keyword id="KW-0699">rRNA-binding</keyword>
<organism>
    <name type="scientific">Desulforamulus reducens (strain ATCC BAA-1160 / DSM 100696 / MI-1)</name>
    <name type="common">Desulfotomaculum reducens</name>
    <dbReference type="NCBI Taxonomy" id="349161"/>
    <lineage>
        <taxon>Bacteria</taxon>
        <taxon>Bacillati</taxon>
        <taxon>Bacillota</taxon>
        <taxon>Clostridia</taxon>
        <taxon>Eubacteriales</taxon>
        <taxon>Peptococcaceae</taxon>
        <taxon>Desulforamulus</taxon>
    </lineage>
</organism>
<sequence length="106" mass="11684">MPKVHVRKGDTVMVITGKDAGKKGKVVTVEPAKNRVIVEGVNIVKRHRKATPQMPQGGIVEKEAPIHSSNVMLFCNKCNKATRIQKKVLDNGNKERICKHCGETLS</sequence>
<protein>
    <recommendedName>
        <fullName evidence="1">Large ribosomal subunit protein uL24</fullName>
    </recommendedName>
    <alternativeName>
        <fullName evidence="2">50S ribosomal protein L24</fullName>
    </alternativeName>
</protein>
<reference key="1">
    <citation type="submission" date="2007-03" db="EMBL/GenBank/DDBJ databases">
        <title>Complete sequence of Desulfotomaculum reducens MI-1.</title>
        <authorList>
            <consortium name="US DOE Joint Genome Institute"/>
            <person name="Copeland A."/>
            <person name="Lucas S."/>
            <person name="Lapidus A."/>
            <person name="Barry K."/>
            <person name="Detter J.C."/>
            <person name="Glavina del Rio T."/>
            <person name="Hammon N."/>
            <person name="Israni S."/>
            <person name="Dalin E."/>
            <person name="Tice H."/>
            <person name="Pitluck S."/>
            <person name="Sims D."/>
            <person name="Brettin T."/>
            <person name="Bruce D."/>
            <person name="Han C."/>
            <person name="Tapia R."/>
            <person name="Schmutz J."/>
            <person name="Larimer F."/>
            <person name="Land M."/>
            <person name="Hauser L."/>
            <person name="Kyrpides N."/>
            <person name="Kim E."/>
            <person name="Tebo B.M."/>
            <person name="Richardson P."/>
        </authorList>
    </citation>
    <scope>NUCLEOTIDE SEQUENCE [LARGE SCALE GENOMIC DNA]</scope>
    <source>
        <strain>ATCC BAA-1160 / DSM 100696 / MI-1</strain>
    </source>
</reference>
<evidence type="ECO:0000255" key="1">
    <source>
        <dbReference type="HAMAP-Rule" id="MF_01326"/>
    </source>
</evidence>
<evidence type="ECO:0000305" key="2"/>
<accession>A4J122</accession>
<gene>
    <name evidence="1" type="primary">rplX</name>
    <name type="ordered locus">Dred_0226</name>
</gene>
<proteinExistence type="inferred from homology"/>
<comment type="function">
    <text evidence="1">One of two assembly initiator proteins, it binds directly to the 5'-end of the 23S rRNA, where it nucleates assembly of the 50S subunit.</text>
</comment>
<comment type="function">
    <text evidence="1">One of the proteins that surrounds the polypeptide exit tunnel on the outside of the subunit.</text>
</comment>
<comment type="subunit">
    <text evidence="1">Part of the 50S ribosomal subunit.</text>
</comment>
<comment type="similarity">
    <text evidence="1">Belongs to the universal ribosomal protein uL24 family.</text>
</comment>